<dbReference type="EMBL" id="CP000377">
    <property type="protein sequence ID" value="ABF64746.1"/>
    <property type="molecule type" value="Genomic_DNA"/>
</dbReference>
<dbReference type="RefSeq" id="WP_011539339.1">
    <property type="nucleotide sequence ID" value="NC_008044.1"/>
</dbReference>
<dbReference type="SMR" id="Q1GF20"/>
<dbReference type="STRING" id="292414.TM1040_2014"/>
<dbReference type="KEGG" id="sit:TM1040_2014"/>
<dbReference type="eggNOG" id="COG2001">
    <property type="taxonomic scope" value="Bacteria"/>
</dbReference>
<dbReference type="HOGENOM" id="CLU_107907_1_0_5"/>
<dbReference type="OrthoDB" id="9807753at2"/>
<dbReference type="Proteomes" id="UP000000636">
    <property type="component" value="Chromosome"/>
</dbReference>
<dbReference type="GO" id="GO:0005737">
    <property type="term" value="C:cytoplasm"/>
    <property type="evidence" value="ECO:0007669"/>
    <property type="project" value="UniProtKB-UniRule"/>
</dbReference>
<dbReference type="GO" id="GO:0009295">
    <property type="term" value="C:nucleoid"/>
    <property type="evidence" value="ECO:0007669"/>
    <property type="project" value="UniProtKB-SubCell"/>
</dbReference>
<dbReference type="GO" id="GO:0003700">
    <property type="term" value="F:DNA-binding transcription factor activity"/>
    <property type="evidence" value="ECO:0007669"/>
    <property type="project" value="UniProtKB-UniRule"/>
</dbReference>
<dbReference type="GO" id="GO:0000976">
    <property type="term" value="F:transcription cis-regulatory region binding"/>
    <property type="evidence" value="ECO:0007669"/>
    <property type="project" value="TreeGrafter"/>
</dbReference>
<dbReference type="GO" id="GO:2000143">
    <property type="term" value="P:negative regulation of DNA-templated transcription initiation"/>
    <property type="evidence" value="ECO:0007669"/>
    <property type="project" value="TreeGrafter"/>
</dbReference>
<dbReference type="CDD" id="cd16321">
    <property type="entry name" value="MraZ_C"/>
    <property type="match status" value="1"/>
</dbReference>
<dbReference type="CDD" id="cd16320">
    <property type="entry name" value="MraZ_N"/>
    <property type="match status" value="1"/>
</dbReference>
<dbReference type="Gene3D" id="3.40.1550.20">
    <property type="entry name" value="Transcriptional regulator MraZ domain"/>
    <property type="match status" value="1"/>
</dbReference>
<dbReference type="HAMAP" id="MF_01008">
    <property type="entry name" value="MraZ"/>
    <property type="match status" value="1"/>
</dbReference>
<dbReference type="InterPro" id="IPR003444">
    <property type="entry name" value="MraZ"/>
</dbReference>
<dbReference type="InterPro" id="IPR035644">
    <property type="entry name" value="MraZ_C"/>
</dbReference>
<dbReference type="InterPro" id="IPR020603">
    <property type="entry name" value="MraZ_dom"/>
</dbReference>
<dbReference type="InterPro" id="IPR035642">
    <property type="entry name" value="MraZ_N"/>
</dbReference>
<dbReference type="InterPro" id="IPR038619">
    <property type="entry name" value="MraZ_sf"/>
</dbReference>
<dbReference type="InterPro" id="IPR007159">
    <property type="entry name" value="SpoVT-AbrB_dom"/>
</dbReference>
<dbReference type="InterPro" id="IPR037914">
    <property type="entry name" value="SpoVT-AbrB_sf"/>
</dbReference>
<dbReference type="NCBIfam" id="NF001476">
    <property type="entry name" value="PRK00326.2-2"/>
    <property type="match status" value="1"/>
</dbReference>
<dbReference type="PANTHER" id="PTHR34701">
    <property type="entry name" value="TRANSCRIPTIONAL REGULATOR MRAZ"/>
    <property type="match status" value="1"/>
</dbReference>
<dbReference type="PANTHER" id="PTHR34701:SF1">
    <property type="entry name" value="TRANSCRIPTIONAL REGULATOR MRAZ"/>
    <property type="match status" value="1"/>
</dbReference>
<dbReference type="Pfam" id="PF02381">
    <property type="entry name" value="MraZ"/>
    <property type="match status" value="2"/>
</dbReference>
<dbReference type="SMART" id="SM00966">
    <property type="entry name" value="SpoVT_AbrB"/>
    <property type="match status" value="2"/>
</dbReference>
<dbReference type="SUPFAM" id="SSF89447">
    <property type="entry name" value="AbrB/MazE/MraZ-like"/>
    <property type="match status" value="1"/>
</dbReference>
<dbReference type="PROSITE" id="PS51740">
    <property type="entry name" value="SPOVT_ABRB"/>
    <property type="match status" value="2"/>
</dbReference>
<gene>
    <name evidence="1" type="primary">mraZ</name>
    <name type="ordered locus">TM1040_2014</name>
</gene>
<name>MRAZ_RUEST</name>
<comment type="subunit">
    <text evidence="1">Forms oligomers.</text>
</comment>
<comment type="subcellular location">
    <subcellularLocation>
        <location evidence="1">Cytoplasm</location>
        <location evidence="1">Nucleoid</location>
    </subcellularLocation>
</comment>
<comment type="similarity">
    <text evidence="1">Belongs to the MraZ family.</text>
</comment>
<organism>
    <name type="scientific">Ruegeria sp. (strain TM1040)</name>
    <name type="common">Silicibacter sp.</name>
    <dbReference type="NCBI Taxonomy" id="292414"/>
    <lineage>
        <taxon>Bacteria</taxon>
        <taxon>Pseudomonadati</taxon>
        <taxon>Pseudomonadota</taxon>
        <taxon>Alphaproteobacteria</taxon>
        <taxon>Rhodobacterales</taxon>
        <taxon>Roseobacteraceae</taxon>
        <taxon>Ruegeria</taxon>
    </lineage>
</organism>
<protein>
    <recommendedName>
        <fullName>Transcriptional regulator MraZ</fullName>
    </recommendedName>
</protein>
<feature type="chain" id="PRO_1000062940" description="Transcriptional regulator MraZ">
    <location>
        <begin position="1"/>
        <end position="167"/>
    </location>
</feature>
<feature type="domain" description="SpoVT-AbrB 1" evidence="2">
    <location>
        <begin position="8"/>
        <end position="51"/>
    </location>
</feature>
<feature type="domain" description="SpoVT-AbrB 2" evidence="2">
    <location>
        <begin position="92"/>
        <end position="135"/>
    </location>
</feature>
<proteinExistence type="inferred from homology"/>
<reference key="1">
    <citation type="submission" date="2006-05" db="EMBL/GenBank/DDBJ databases">
        <title>Complete sequence of chromosome of Silicibacter sp. TM1040.</title>
        <authorList>
            <consortium name="US DOE Joint Genome Institute"/>
            <person name="Copeland A."/>
            <person name="Lucas S."/>
            <person name="Lapidus A."/>
            <person name="Barry K."/>
            <person name="Detter J.C."/>
            <person name="Glavina del Rio T."/>
            <person name="Hammon N."/>
            <person name="Israni S."/>
            <person name="Dalin E."/>
            <person name="Tice H."/>
            <person name="Pitluck S."/>
            <person name="Brettin T."/>
            <person name="Bruce D."/>
            <person name="Han C."/>
            <person name="Tapia R."/>
            <person name="Goodwin L."/>
            <person name="Thompson L.S."/>
            <person name="Gilna P."/>
            <person name="Schmutz J."/>
            <person name="Larimer F."/>
            <person name="Land M."/>
            <person name="Hauser L."/>
            <person name="Kyrpides N."/>
            <person name="Kim E."/>
            <person name="Belas R."/>
            <person name="Moran M.A."/>
            <person name="Buchan A."/>
            <person name="Gonzalez J.M."/>
            <person name="Schell M.A."/>
            <person name="Sun F."/>
            <person name="Richardson P."/>
        </authorList>
    </citation>
    <scope>NUCLEOTIDE SEQUENCE [LARGE SCALE GENOMIC DNA]</scope>
    <source>
        <strain>TM1040</strain>
    </source>
</reference>
<accession>Q1GF20</accession>
<sequence>MGRRFRGESHHKVDSKGRVSIPASFRRVLEASDPNWQPGDAPELVIVYGDHRRQYLECYTMEAIEEVDAKIAALPRGSKGRKILERIFNGQSLPTTVDETGRLVLPAKLRQKIDLDKEAFFIASGDTFQIWKPETYEEVEMAEAEKLMDELPDDFDPLEFLDGAGGA</sequence>
<keyword id="KW-0963">Cytoplasm</keyword>
<keyword id="KW-0238">DNA-binding</keyword>
<keyword id="KW-1185">Reference proteome</keyword>
<keyword id="KW-0677">Repeat</keyword>
<keyword id="KW-0804">Transcription</keyword>
<keyword id="KW-0805">Transcription regulation</keyword>
<evidence type="ECO:0000255" key="1">
    <source>
        <dbReference type="HAMAP-Rule" id="MF_01008"/>
    </source>
</evidence>
<evidence type="ECO:0000255" key="2">
    <source>
        <dbReference type="PROSITE-ProRule" id="PRU01076"/>
    </source>
</evidence>